<evidence type="ECO:0000250" key="1">
    <source>
        <dbReference type="UniProtKB" id="P30288"/>
    </source>
</evidence>
<evidence type="ECO:0000269" key="2">
    <source>
    </source>
</evidence>
<evidence type="ECO:0000303" key="3">
    <source>
    </source>
</evidence>
<evidence type="ECO:0000305" key="4"/>
<evidence type="ECO:0000305" key="5">
    <source>
    </source>
</evidence>
<keyword id="KW-0903">Direct protein sequencing</keyword>
<keyword id="KW-1015">Disulfide bond</keyword>
<keyword id="KW-0960">Knottin</keyword>
<keyword id="KW-0528">Neurotoxin</keyword>
<keyword id="KW-0964">Secreted</keyword>
<keyword id="KW-0800">Toxin</keyword>
<comment type="function">
    <text evidence="4">Neurotoxin.</text>
</comment>
<comment type="subcellular location">
    <subcellularLocation>
        <location evidence="2">Secreted</location>
    </subcellularLocation>
</comment>
<comment type="tissue specificity">
    <text evidence="5">Expressed by the venom gland.</text>
</comment>
<comment type="domain">
    <text evidence="1">The presence of a 'disulfide through disulfide knot' structurally defines this protein as a knottin.</text>
</comment>
<comment type="mass spectrometry"/>
<comment type="similarity">
    <text evidence="4">Belongs to the neurotoxin 02 (plectoxin) family. 01 (Tx3) subfamily.</text>
</comment>
<comment type="caution">
    <text evidence="4">While it is structurally defined as a knottin it lacks the conserved Cys residue in position 9.</text>
</comment>
<organism evidence="4">
    <name type="scientific">Phoneutria reidyi</name>
    <name type="common">Brazilian Amazonian armed spider</name>
    <name type="synonym">Ctenus reidyi</name>
    <dbReference type="NCBI Taxonomy" id="272752"/>
    <lineage>
        <taxon>Eukaryota</taxon>
        <taxon>Metazoa</taxon>
        <taxon>Ecdysozoa</taxon>
        <taxon>Arthropoda</taxon>
        <taxon>Chelicerata</taxon>
        <taxon>Arachnida</taxon>
        <taxon>Araneae</taxon>
        <taxon>Araneomorphae</taxon>
        <taxon>Entelegynae</taxon>
        <taxon>Lycosoidea</taxon>
        <taxon>Ctenidae</taxon>
        <taxon>Phoneutria</taxon>
    </lineage>
</organism>
<name>TX21A_PHORI</name>
<proteinExistence type="evidence at protein level"/>
<protein>
    <recommendedName>
        <fullName evidence="4">U2-ctenitoxin-Pr1a</fullName>
        <shortName evidence="4">U2-CNTX-Pr1a</shortName>
    </recommendedName>
    <alternativeName>
        <fullName evidence="3">Neurotoxin PRTx22C1</fullName>
    </alternativeName>
</protein>
<sequence>ECADVYKECWYPEKPCCKDRACQCSLGMNCKCKATLGDIF</sequence>
<accession>P83909</accession>
<dbReference type="SMR" id="P83909"/>
<dbReference type="ArachnoServer" id="AS000237">
    <property type="toxin name" value="U2-ctenitoxin-Pr1a"/>
</dbReference>
<dbReference type="GO" id="GO:0005576">
    <property type="term" value="C:extracellular region"/>
    <property type="evidence" value="ECO:0007669"/>
    <property type="project" value="UniProtKB-SubCell"/>
</dbReference>
<dbReference type="GO" id="GO:0008200">
    <property type="term" value="F:ion channel inhibitor activity"/>
    <property type="evidence" value="ECO:0007669"/>
    <property type="project" value="InterPro"/>
</dbReference>
<dbReference type="GO" id="GO:0090729">
    <property type="term" value="F:toxin activity"/>
    <property type="evidence" value="ECO:0007669"/>
    <property type="project" value="UniProtKB-KW"/>
</dbReference>
<dbReference type="CDD" id="cd12960">
    <property type="entry name" value="Spider_toxin"/>
    <property type="match status" value="1"/>
</dbReference>
<dbReference type="Gene3D" id="4.10.40.10">
    <property type="match status" value="1"/>
</dbReference>
<dbReference type="InterPro" id="IPR004169">
    <property type="entry name" value="Spidertoxin"/>
</dbReference>
<dbReference type="Pfam" id="PF02819">
    <property type="entry name" value="Toxin_9"/>
    <property type="match status" value="1"/>
</dbReference>
<dbReference type="SUPFAM" id="SSF57059">
    <property type="entry name" value="omega toxin-like"/>
    <property type="match status" value="1"/>
</dbReference>
<feature type="peptide" id="PRO_0000044970" description="U2-ctenitoxin-Pr1a" evidence="3">
    <location>
        <begin position="1"/>
        <end position="40"/>
    </location>
</feature>
<feature type="disulfide bond" evidence="1">
    <location>
        <begin position="2"/>
        <end position="17"/>
    </location>
</feature>
<feature type="disulfide bond" evidence="1">
    <location>
        <begin position="9"/>
        <end position="22"/>
    </location>
</feature>
<feature type="disulfide bond" evidence="1">
    <location>
        <begin position="16"/>
        <end position="32"/>
    </location>
</feature>
<feature type="disulfide bond" evidence="1">
    <location>
        <begin position="24"/>
        <end position="30"/>
    </location>
</feature>
<reference key="1">
    <citation type="journal article" date="2006" name="Comp. Biochem. Physiol.">
        <title>Comparison of the partial proteomes of the venoms of Brazilian spiders of the genus Phoneutria.</title>
        <authorList>
            <person name="Richardson M."/>
            <person name="Pimenta A.M."/>
            <person name="Bemquerer M.P."/>
            <person name="Santoro M.M."/>
            <person name="Beirao P.S."/>
            <person name="Lima M.E."/>
            <person name="Figueiredo S.G."/>
            <person name="Bloch C. Jr."/>
            <person name="Vasconcelos E.A."/>
            <person name="Campos F.A."/>
            <person name="Gomes P.C."/>
            <person name="Cordeiro M.N."/>
        </authorList>
    </citation>
    <scope>PROTEIN SEQUENCE</scope>
    <scope>SUBCELLULAR LOCATION</scope>
    <scope>MASS SPECTROMETRY</scope>
    <source>
        <tissue>Venom</tissue>
    </source>
</reference>